<proteinExistence type="inferred from homology"/>
<feature type="chain" id="PRO_1000017109" description="tRNA pseudouridine synthase A">
    <location>
        <begin position="1"/>
        <end position="249"/>
    </location>
</feature>
<feature type="active site" description="Nucleophile" evidence="1">
    <location>
        <position position="52"/>
    </location>
</feature>
<feature type="binding site" evidence="1">
    <location>
        <position position="111"/>
    </location>
    <ligand>
        <name>substrate</name>
    </ligand>
</feature>
<comment type="function">
    <text evidence="1">Formation of pseudouridine at positions 38, 39 and 40 in the anticodon stem and loop of transfer RNAs.</text>
</comment>
<comment type="catalytic activity">
    <reaction evidence="1">
        <text>uridine(38/39/40) in tRNA = pseudouridine(38/39/40) in tRNA</text>
        <dbReference type="Rhea" id="RHEA:22376"/>
        <dbReference type="Rhea" id="RHEA-COMP:10085"/>
        <dbReference type="Rhea" id="RHEA-COMP:10087"/>
        <dbReference type="ChEBI" id="CHEBI:65314"/>
        <dbReference type="ChEBI" id="CHEBI:65315"/>
        <dbReference type="EC" id="5.4.99.12"/>
    </reaction>
</comment>
<comment type="subunit">
    <text evidence="1">Homodimer.</text>
</comment>
<comment type="similarity">
    <text evidence="1">Belongs to the tRNA pseudouridine synthase TruA family.</text>
</comment>
<sequence>MPRYRITIEYDGRPFSGWQRQDNAPSVQESLERAAEKLDGAPVLVYGAGRTDSGVHALAQVAHLDLAKDLSTDKVRDAINYHLKPDPVAVIEAARVSDDFHARFSATRRHYLYRMIDRRAPLTLDRGQVWRVTRKLDAEAMHHAAQALLGQHDFTTFRDAQCQAESPVKSLDAISVSRYGEEVQLTCSARSFLHRQVRSMVGSLVEVGVGKWSARDFKRALDAADRSRCGPVAPADGLYLTAVDYPGPA</sequence>
<reference key="1">
    <citation type="submission" date="2006-08" db="EMBL/GenBank/DDBJ databases">
        <title>Complete sequence of Maricaulis maris MCS10.</title>
        <authorList>
            <consortium name="US DOE Joint Genome Institute"/>
            <person name="Copeland A."/>
            <person name="Lucas S."/>
            <person name="Lapidus A."/>
            <person name="Barry K."/>
            <person name="Detter J.C."/>
            <person name="Glavina del Rio T."/>
            <person name="Hammon N."/>
            <person name="Israni S."/>
            <person name="Dalin E."/>
            <person name="Tice H."/>
            <person name="Pitluck S."/>
            <person name="Saunders E."/>
            <person name="Brettin T."/>
            <person name="Bruce D."/>
            <person name="Han C."/>
            <person name="Tapia R."/>
            <person name="Gilna P."/>
            <person name="Schmutz J."/>
            <person name="Larimer F."/>
            <person name="Land M."/>
            <person name="Hauser L."/>
            <person name="Kyrpides N."/>
            <person name="Mikhailova N."/>
            <person name="Viollier P."/>
            <person name="Stephens C."/>
            <person name="Richardson P."/>
        </authorList>
    </citation>
    <scope>NUCLEOTIDE SEQUENCE [LARGE SCALE GENOMIC DNA]</scope>
    <source>
        <strain>MCS10</strain>
    </source>
</reference>
<protein>
    <recommendedName>
        <fullName evidence="1">tRNA pseudouridine synthase A</fullName>
        <ecNumber evidence="1">5.4.99.12</ecNumber>
    </recommendedName>
    <alternativeName>
        <fullName evidence="1">tRNA pseudouridine(38-40) synthase</fullName>
    </alternativeName>
    <alternativeName>
        <fullName evidence="1">tRNA pseudouridylate synthase I</fullName>
    </alternativeName>
    <alternativeName>
        <fullName evidence="1">tRNA-uridine isomerase I</fullName>
    </alternativeName>
</protein>
<gene>
    <name evidence="1" type="primary">truA</name>
    <name type="ordered locus">Mmar10_0447</name>
</gene>
<dbReference type="EC" id="5.4.99.12" evidence="1"/>
<dbReference type="EMBL" id="CP000449">
    <property type="protein sequence ID" value="ABI64740.1"/>
    <property type="molecule type" value="Genomic_DNA"/>
</dbReference>
<dbReference type="RefSeq" id="WP_011642387.1">
    <property type="nucleotide sequence ID" value="NC_008347.1"/>
</dbReference>
<dbReference type="SMR" id="Q0ASJ7"/>
<dbReference type="STRING" id="394221.Mmar10_0447"/>
<dbReference type="KEGG" id="mmr:Mmar10_0447"/>
<dbReference type="eggNOG" id="COG0101">
    <property type="taxonomic scope" value="Bacteria"/>
</dbReference>
<dbReference type="HOGENOM" id="CLU_014673_0_2_5"/>
<dbReference type="OrthoDB" id="9811823at2"/>
<dbReference type="Proteomes" id="UP000001964">
    <property type="component" value="Chromosome"/>
</dbReference>
<dbReference type="GO" id="GO:0003723">
    <property type="term" value="F:RNA binding"/>
    <property type="evidence" value="ECO:0007669"/>
    <property type="project" value="InterPro"/>
</dbReference>
<dbReference type="GO" id="GO:0160147">
    <property type="term" value="F:tRNA pseudouridine(38-40) synthase activity"/>
    <property type="evidence" value="ECO:0007669"/>
    <property type="project" value="UniProtKB-EC"/>
</dbReference>
<dbReference type="GO" id="GO:0031119">
    <property type="term" value="P:tRNA pseudouridine synthesis"/>
    <property type="evidence" value="ECO:0007669"/>
    <property type="project" value="UniProtKB-UniRule"/>
</dbReference>
<dbReference type="CDD" id="cd02570">
    <property type="entry name" value="PseudoU_synth_EcTruA"/>
    <property type="match status" value="1"/>
</dbReference>
<dbReference type="FunFam" id="3.30.70.580:FF:000001">
    <property type="entry name" value="tRNA pseudouridine synthase A"/>
    <property type="match status" value="1"/>
</dbReference>
<dbReference type="Gene3D" id="3.30.70.660">
    <property type="entry name" value="Pseudouridine synthase I, catalytic domain, C-terminal subdomain"/>
    <property type="match status" value="1"/>
</dbReference>
<dbReference type="Gene3D" id="3.30.70.580">
    <property type="entry name" value="Pseudouridine synthase I, catalytic domain, N-terminal subdomain"/>
    <property type="match status" value="1"/>
</dbReference>
<dbReference type="HAMAP" id="MF_00171">
    <property type="entry name" value="TruA"/>
    <property type="match status" value="1"/>
</dbReference>
<dbReference type="InterPro" id="IPR020103">
    <property type="entry name" value="PsdUridine_synth_cat_dom_sf"/>
</dbReference>
<dbReference type="InterPro" id="IPR001406">
    <property type="entry name" value="PsdUridine_synth_TruA"/>
</dbReference>
<dbReference type="InterPro" id="IPR020097">
    <property type="entry name" value="PsdUridine_synth_TruA_a/b_dom"/>
</dbReference>
<dbReference type="InterPro" id="IPR020095">
    <property type="entry name" value="PsdUridine_synth_TruA_C"/>
</dbReference>
<dbReference type="InterPro" id="IPR020094">
    <property type="entry name" value="TruA/RsuA/RluB/E/F_N"/>
</dbReference>
<dbReference type="NCBIfam" id="TIGR00071">
    <property type="entry name" value="hisT_truA"/>
    <property type="match status" value="1"/>
</dbReference>
<dbReference type="PANTHER" id="PTHR11142">
    <property type="entry name" value="PSEUDOURIDYLATE SYNTHASE"/>
    <property type="match status" value="1"/>
</dbReference>
<dbReference type="PANTHER" id="PTHR11142:SF0">
    <property type="entry name" value="TRNA PSEUDOURIDINE SYNTHASE-LIKE 1"/>
    <property type="match status" value="1"/>
</dbReference>
<dbReference type="Pfam" id="PF01416">
    <property type="entry name" value="PseudoU_synth_1"/>
    <property type="match status" value="2"/>
</dbReference>
<dbReference type="PIRSF" id="PIRSF001430">
    <property type="entry name" value="tRNA_psdUrid_synth"/>
    <property type="match status" value="1"/>
</dbReference>
<dbReference type="SUPFAM" id="SSF55120">
    <property type="entry name" value="Pseudouridine synthase"/>
    <property type="match status" value="1"/>
</dbReference>
<accession>Q0ASJ7</accession>
<name>TRUA_MARMM</name>
<evidence type="ECO:0000255" key="1">
    <source>
        <dbReference type="HAMAP-Rule" id="MF_00171"/>
    </source>
</evidence>
<organism>
    <name type="scientific">Maricaulis maris (strain MCS10)</name>
    <name type="common">Caulobacter maris</name>
    <dbReference type="NCBI Taxonomy" id="394221"/>
    <lineage>
        <taxon>Bacteria</taxon>
        <taxon>Pseudomonadati</taxon>
        <taxon>Pseudomonadota</taxon>
        <taxon>Alphaproteobacteria</taxon>
        <taxon>Maricaulales</taxon>
        <taxon>Maricaulaceae</taxon>
        <taxon>Maricaulis</taxon>
    </lineage>
</organism>
<keyword id="KW-0413">Isomerase</keyword>
<keyword id="KW-1185">Reference proteome</keyword>
<keyword id="KW-0819">tRNA processing</keyword>